<feature type="chain" id="PRO_1000045813" description="Adenosylcobinamide-GDP ribazoletransferase">
    <location>
        <begin position="1"/>
        <end position="247"/>
    </location>
</feature>
<feature type="transmembrane region" description="Helical" evidence="1">
    <location>
        <begin position="34"/>
        <end position="54"/>
    </location>
</feature>
<feature type="transmembrane region" description="Helical" evidence="1">
    <location>
        <begin position="57"/>
        <end position="77"/>
    </location>
</feature>
<feature type="transmembrane region" description="Helical" evidence="1">
    <location>
        <begin position="113"/>
        <end position="133"/>
    </location>
</feature>
<feature type="transmembrane region" description="Helical" evidence="1">
    <location>
        <begin position="138"/>
        <end position="158"/>
    </location>
</feature>
<feature type="transmembrane region" description="Helical" evidence="1">
    <location>
        <begin position="194"/>
        <end position="214"/>
    </location>
</feature>
<proteinExistence type="inferred from homology"/>
<name>COBS_SHIF8</name>
<comment type="function">
    <text evidence="1">Joins adenosylcobinamide-GDP and alpha-ribazole to generate adenosylcobalamin (Ado-cobalamin). Also synthesizes adenosylcobalamin 5'-phosphate from adenosylcobinamide-GDP and alpha-ribazole 5'-phosphate.</text>
</comment>
<comment type="catalytic activity">
    <reaction evidence="1">
        <text>alpha-ribazole + adenosylcob(III)inamide-GDP = adenosylcob(III)alamin + GMP + H(+)</text>
        <dbReference type="Rhea" id="RHEA:16049"/>
        <dbReference type="ChEBI" id="CHEBI:10329"/>
        <dbReference type="ChEBI" id="CHEBI:15378"/>
        <dbReference type="ChEBI" id="CHEBI:18408"/>
        <dbReference type="ChEBI" id="CHEBI:58115"/>
        <dbReference type="ChEBI" id="CHEBI:60487"/>
        <dbReference type="EC" id="2.7.8.26"/>
    </reaction>
</comment>
<comment type="catalytic activity">
    <reaction evidence="1">
        <text>alpha-ribazole 5'-phosphate + adenosylcob(III)inamide-GDP = adenosylcob(III)alamin 5'-phosphate + GMP + H(+)</text>
        <dbReference type="Rhea" id="RHEA:23560"/>
        <dbReference type="ChEBI" id="CHEBI:15378"/>
        <dbReference type="ChEBI" id="CHEBI:57918"/>
        <dbReference type="ChEBI" id="CHEBI:58115"/>
        <dbReference type="ChEBI" id="CHEBI:60487"/>
        <dbReference type="ChEBI" id="CHEBI:60493"/>
        <dbReference type="EC" id="2.7.8.26"/>
    </reaction>
</comment>
<comment type="cofactor">
    <cofactor evidence="1">
        <name>Mg(2+)</name>
        <dbReference type="ChEBI" id="CHEBI:18420"/>
    </cofactor>
</comment>
<comment type="pathway">
    <text evidence="1">Cofactor biosynthesis; adenosylcobalamin biosynthesis; adenosylcobalamin from cob(II)yrinate a,c-diamide: step 7/7.</text>
</comment>
<comment type="subcellular location">
    <subcellularLocation>
        <location evidence="1">Cell inner membrane</location>
        <topology evidence="1">Multi-pass membrane protein</topology>
    </subcellularLocation>
</comment>
<comment type="similarity">
    <text evidence="1">Belongs to the CobS family.</text>
</comment>
<protein>
    <recommendedName>
        <fullName evidence="1">Adenosylcobinamide-GDP ribazoletransferase</fullName>
        <ecNumber evidence="1">2.7.8.26</ecNumber>
    </recommendedName>
    <alternativeName>
        <fullName evidence="1">Cobalamin synthase</fullName>
    </alternativeName>
    <alternativeName>
        <fullName evidence="1">Cobalamin-5'-phosphate synthase</fullName>
    </alternativeName>
</protein>
<evidence type="ECO:0000255" key="1">
    <source>
        <dbReference type="HAMAP-Rule" id="MF_00719"/>
    </source>
</evidence>
<keyword id="KW-0997">Cell inner membrane</keyword>
<keyword id="KW-1003">Cell membrane</keyword>
<keyword id="KW-0169">Cobalamin biosynthesis</keyword>
<keyword id="KW-0460">Magnesium</keyword>
<keyword id="KW-0472">Membrane</keyword>
<keyword id="KW-0808">Transferase</keyword>
<keyword id="KW-0812">Transmembrane</keyword>
<keyword id="KW-1133">Transmembrane helix</keyword>
<dbReference type="EC" id="2.7.8.26" evidence="1"/>
<dbReference type="EMBL" id="CP000266">
    <property type="protein sequence ID" value="ABF04192.1"/>
    <property type="molecule type" value="Genomic_DNA"/>
</dbReference>
<dbReference type="RefSeq" id="WP_005105559.1">
    <property type="nucleotide sequence ID" value="NC_008258.1"/>
</dbReference>
<dbReference type="KEGG" id="sfv:SFV_2064"/>
<dbReference type="HOGENOM" id="CLU_057426_1_1_6"/>
<dbReference type="UniPathway" id="UPA00148">
    <property type="reaction ID" value="UER00238"/>
</dbReference>
<dbReference type="Proteomes" id="UP000000659">
    <property type="component" value="Chromosome"/>
</dbReference>
<dbReference type="GO" id="GO:0005886">
    <property type="term" value="C:plasma membrane"/>
    <property type="evidence" value="ECO:0007669"/>
    <property type="project" value="UniProtKB-SubCell"/>
</dbReference>
<dbReference type="GO" id="GO:0051073">
    <property type="term" value="F:adenosylcobinamide-GDP ribazoletransferase activity"/>
    <property type="evidence" value="ECO:0007669"/>
    <property type="project" value="UniProtKB-UniRule"/>
</dbReference>
<dbReference type="GO" id="GO:0008818">
    <property type="term" value="F:cobalamin 5'-phosphate synthase activity"/>
    <property type="evidence" value="ECO:0007669"/>
    <property type="project" value="UniProtKB-UniRule"/>
</dbReference>
<dbReference type="GO" id="GO:0009236">
    <property type="term" value="P:cobalamin biosynthetic process"/>
    <property type="evidence" value="ECO:0007669"/>
    <property type="project" value="UniProtKB-UniRule"/>
</dbReference>
<dbReference type="HAMAP" id="MF_00719">
    <property type="entry name" value="CobS"/>
    <property type="match status" value="1"/>
</dbReference>
<dbReference type="InterPro" id="IPR003805">
    <property type="entry name" value="CobS"/>
</dbReference>
<dbReference type="NCBIfam" id="TIGR00317">
    <property type="entry name" value="cobS"/>
    <property type="match status" value="1"/>
</dbReference>
<dbReference type="PANTHER" id="PTHR34148">
    <property type="entry name" value="ADENOSYLCOBINAMIDE-GDP RIBAZOLETRANSFERASE"/>
    <property type="match status" value="1"/>
</dbReference>
<dbReference type="PANTHER" id="PTHR34148:SF1">
    <property type="entry name" value="ADENOSYLCOBINAMIDE-GDP RIBAZOLETRANSFERASE"/>
    <property type="match status" value="1"/>
</dbReference>
<dbReference type="Pfam" id="PF02654">
    <property type="entry name" value="CobS"/>
    <property type="match status" value="1"/>
</dbReference>
<gene>
    <name evidence="1" type="primary">cobS</name>
    <name type="ordered locus">SFV_2064</name>
</gene>
<sequence>MSKLFWAMLSFITRLPVPRRWSQGLDFEHYSRGIITFPLIGLLLGAISGLVFMVLQAWCGAPLAALFSVLVLALMTGEFHLDGLADTCDGVFSARSRDRMLEIMRDSRLGTHGGLALIFVVLAKILVLSELALRGEPILASLAAACAVSRGTAALLMYRHRYAREEGLGNVFIGKIDGRQTCVTLGLAAIFAAVLLLGMHGVAAMVVTMVAIFILGQLLKRTLDGQTGDTLGAAIELGELVFLLALL</sequence>
<accession>Q0T3C3</accession>
<reference key="1">
    <citation type="journal article" date="2006" name="BMC Genomics">
        <title>Complete genome sequence of Shigella flexneri 5b and comparison with Shigella flexneri 2a.</title>
        <authorList>
            <person name="Nie H."/>
            <person name="Yang F."/>
            <person name="Zhang X."/>
            <person name="Yang J."/>
            <person name="Chen L."/>
            <person name="Wang J."/>
            <person name="Xiong Z."/>
            <person name="Peng J."/>
            <person name="Sun L."/>
            <person name="Dong J."/>
            <person name="Xue Y."/>
            <person name="Xu X."/>
            <person name="Chen S."/>
            <person name="Yao Z."/>
            <person name="Shen Y."/>
            <person name="Jin Q."/>
        </authorList>
    </citation>
    <scope>NUCLEOTIDE SEQUENCE [LARGE SCALE GENOMIC DNA]</scope>
    <source>
        <strain>8401</strain>
    </source>
</reference>
<organism>
    <name type="scientific">Shigella flexneri serotype 5b (strain 8401)</name>
    <dbReference type="NCBI Taxonomy" id="373384"/>
    <lineage>
        <taxon>Bacteria</taxon>
        <taxon>Pseudomonadati</taxon>
        <taxon>Pseudomonadota</taxon>
        <taxon>Gammaproteobacteria</taxon>
        <taxon>Enterobacterales</taxon>
        <taxon>Enterobacteriaceae</taxon>
        <taxon>Shigella</taxon>
    </lineage>
</organism>